<sequence length="229" mass="24912">MMKALLVADDPVSVNLVFENHTQCGYEVIHYRSALKALDNMEEIQPQLLFINASDFPRHWRVLTQFFKHQSVCGARVILLVNTPSSSLSARQVAQAGVHALIDYTLSPEEGRKALCGVLTPSACAGSVDVGHAHTCQADFVFTNPCSGSIVTGTVREVSEEGVDFIPDFPASVNNLQEQDVLEHCALKVAHDILGVRCSFHSSDGRILLRFIDPDASLVHAVRSVTGTT</sequence>
<protein>
    <recommendedName>
        <fullName>Uncharacterized protein TP_0454</fullName>
    </recommendedName>
</protein>
<gene>
    <name type="ordered locus">TP_0454</name>
</gene>
<name>Y454_TREPA</name>
<proteinExistence type="predicted"/>
<accession>O83467</accession>
<keyword id="KW-1185">Reference proteome</keyword>
<organism>
    <name type="scientific">Treponema pallidum (strain Nichols)</name>
    <dbReference type="NCBI Taxonomy" id="243276"/>
    <lineage>
        <taxon>Bacteria</taxon>
        <taxon>Pseudomonadati</taxon>
        <taxon>Spirochaetota</taxon>
        <taxon>Spirochaetia</taxon>
        <taxon>Spirochaetales</taxon>
        <taxon>Treponemataceae</taxon>
        <taxon>Treponema</taxon>
    </lineage>
</organism>
<dbReference type="EMBL" id="AE000520">
    <property type="protein sequence ID" value="AAC65444.1"/>
    <property type="molecule type" value="Genomic_DNA"/>
</dbReference>
<dbReference type="PIR" id="G71322">
    <property type="entry name" value="G71322"/>
</dbReference>
<dbReference type="RefSeq" id="WP_010881903.1">
    <property type="nucleotide sequence ID" value="NC_021490.2"/>
</dbReference>
<dbReference type="SMR" id="O83467"/>
<dbReference type="STRING" id="243276.TP_0454"/>
<dbReference type="EnsemblBacteria" id="AAC65444">
    <property type="protein sequence ID" value="AAC65444"/>
    <property type="gene ID" value="TP_0454"/>
</dbReference>
<dbReference type="KEGG" id="tpa:TP_0454"/>
<dbReference type="KEGG" id="tpw:TPANIC_0454"/>
<dbReference type="eggNOG" id="COG3706">
    <property type="taxonomic scope" value="Bacteria"/>
</dbReference>
<dbReference type="HOGENOM" id="CLU_1170086_0_0_12"/>
<dbReference type="OrthoDB" id="359116at2"/>
<dbReference type="Proteomes" id="UP000000811">
    <property type="component" value="Chromosome"/>
</dbReference>
<reference key="1">
    <citation type="journal article" date="1998" name="Science">
        <title>Complete genome sequence of Treponema pallidum, the syphilis spirochete.</title>
        <authorList>
            <person name="Fraser C.M."/>
            <person name="Norris S.J."/>
            <person name="Weinstock G.M."/>
            <person name="White O."/>
            <person name="Sutton G.G."/>
            <person name="Dodson R.J."/>
            <person name="Gwinn M.L."/>
            <person name="Hickey E.K."/>
            <person name="Clayton R.A."/>
            <person name="Ketchum K.A."/>
            <person name="Sodergren E."/>
            <person name="Hardham J.M."/>
            <person name="McLeod M.P."/>
            <person name="Salzberg S.L."/>
            <person name="Peterson J.D."/>
            <person name="Khalak H.G."/>
            <person name="Richardson D.L."/>
            <person name="Howell J.K."/>
            <person name="Chidambaram M."/>
            <person name="Utterback T.R."/>
            <person name="McDonald L.A."/>
            <person name="Artiach P."/>
            <person name="Bowman C."/>
            <person name="Cotton M.D."/>
            <person name="Fujii C."/>
            <person name="Garland S.A."/>
            <person name="Hatch B."/>
            <person name="Horst K."/>
            <person name="Roberts K.M."/>
            <person name="Sandusky M."/>
            <person name="Weidman J.F."/>
            <person name="Smith H.O."/>
            <person name="Venter J.C."/>
        </authorList>
    </citation>
    <scope>NUCLEOTIDE SEQUENCE [LARGE SCALE GENOMIC DNA]</scope>
    <source>
        <strain>Nichols</strain>
    </source>
</reference>
<feature type="chain" id="PRO_0000202257" description="Uncharacterized protein TP_0454">
    <location>
        <begin position="1"/>
        <end position="229"/>
    </location>
</feature>